<accession>Q9CAG3</accession>
<accession>Q0WLL0</accession>
<accession>Q56WC0</accession>
<proteinExistence type="evidence at protein level"/>
<keyword id="KW-0150">Chloroplast</keyword>
<keyword id="KW-0223">Dioxygenase</keyword>
<keyword id="KW-0275">Fatty acid biosynthesis</keyword>
<keyword id="KW-0276">Fatty acid metabolism</keyword>
<keyword id="KW-0408">Iron</keyword>
<keyword id="KW-0444">Lipid biosynthesis</keyword>
<keyword id="KW-0443">Lipid metabolism</keyword>
<keyword id="KW-0479">Metal-binding</keyword>
<keyword id="KW-0560">Oxidoreductase</keyword>
<keyword id="KW-0925">Oxylipin biosynthesis</keyword>
<keyword id="KW-0934">Plastid</keyword>
<keyword id="KW-1185">Reference proteome</keyword>
<keyword id="KW-0809">Transit peptide</keyword>
<reference key="1">
    <citation type="submission" date="2004-06" db="EMBL/GenBank/DDBJ databases">
        <title>AtLOX6, the fourth chloroplastic 13-LOX from Arabidopsis thaliana.</title>
        <authorList>
            <person name="Behrends V."/>
            <person name="Kunze S."/>
            <person name="Feussner I."/>
        </authorList>
    </citation>
    <scope>NUCLEOTIDE SEQUENCE [MRNA]</scope>
</reference>
<reference key="2">
    <citation type="journal article" date="2000" name="Nature">
        <title>Sequence and analysis of chromosome 1 of the plant Arabidopsis thaliana.</title>
        <authorList>
            <person name="Theologis A."/>
            <person name="Ecker J.R."/>
            <person name="Palm C.J."/>
            <person name="Federspiel N.A."/>
            <person name="Kaul S."/>
            <person name="White O."/>
            <person name="Alonso J."/>
            <person name="Altafi H."/>
            <person name="Araujo R."/>
            <person name="Bowman C.L."/>
            <person name="Brooks S.Y."/>
            <person name="Buehler E."/>
            <person name="Chan A."/>
            <person name="Chao Q."/>
            <person name="Chen H."/>
            <person name="Cheuk R.F."/>
            <person name="Chin C.W."/>
            <person name="Chung M.K."/>
            <person name="Conn L."/>
            <person name="Conway A.B."/>
            <person name="Conway A.R."/>
            <person name="Creasy T.H."/>
            <person name="Dewar K."/>
            <person name="Dunn P."/>
            <person name="Etgu P."/>
            <person name="Feldblyum T.V."/>
            <person name="Feng J.-D."/>
            <person name="Fong B."/>
            <person name="Fujii C.Y."/>
            <person name="Gill J.E."/>
            <person name="Goldsmith A.D."/>
            <person name="Haas B."/>
            <person name="Hansen N.F."/>
            <person name="Hughes B."/>
            <person name="Huizar L."/>
            <person name="Hunter J.L."/>
            <person name="Jenkins J."/>
            <person name="Johnson-Hopson C."/>
            <person name="Khan S."/>
            <person name="Khaykin E."/>
            <person name="Kim C.J."/>
            <person name="Koo H.L."/>
            <person name="Kremenetskaia I."/>
            <person name="Kurtz D.B."/>
            <person name="Kwan A."/>
            <person name="Lam B."/>
            <person name="Langin-Hooper S."/>
            <person name="Lee A."/>
            <person name="Lee J.M."/>
            <person name="Lenz C.A."/>
            <person name="Li J.H."/>
            <person name="Li Y.-P."/>
            <person name="Lin X."/>
            <person name="Liu S.X."/>
            <person name="Liu Z.A."/>
            <person name="Luros J.S."/>
            <person name="Maiti R."/>
            <person name="Marziali A."/>
            <person name="Militscher J."/>
            <person name="Miranda M."/>
            <person name="Nguyen M."/>
            <person name="Nierman W.C."/>
            <person name="Osborne B.I."/>
            <person name="Pai G."/>
            <person name="Peterson J."/>
            <person name="Pham P.K."/>
            <person name="Rizzo M."/>
            <person name="Rooney T."/>
            <person name="Rowley D."/>
            <person name="Sakano H."/>
            <person name="Salzberg S.L."/>
            <person name="Schwartz J.R."/>
            <person name="Shinn P."/>
            <person name="Southwick A.M."/>
            <person name="Sun H."/>
            <person name="Tallon L.J."/>
            <person name="Tambunga G."/>
            <person name="Toriumi M.J."/>
            <person name="Town C.D."/>
            <person name="Utterback T."/>
            <person name="Van Aken S."/>
            <person name="Vaysberg M."/>
            <person name="Vysotskaia V.S."/>
            <person name="Walker M."/>
            <person name="Wu D."/>
            <person name="Yu G."/>
            <person name="Fraser C.M."/>
            <person name="Venter J.C."/>
            <person name="Davis R.W."/>
        </authorList>
    </citation>
    <scope>NUCLEOTIDE SEQUENCE [LARGE SCALE GENOMIC DNA]</scope>
    <source>
        <strain>cv. Columbia</strain>
    </source>
</reference>
<reference key="3">
    <citation type="journal article" date="2017" name="Plant J.">
        <title>Araport11: a complete reannotation of the Arabidopsis thaliana reference genome.</title>
        <authorList>
            <person name="Cheng C.Y."/>
            <person name="Krishnakumar V."/>
            <person name="Chan A.P."/>
            <person name="Thibaud-Nissen F."/>
            <person name="Schobel S."/>
            <person name="Town C.D."/>
        </authorList>
    </citation>
    <scope>GENOME REANNOTATION</scope>
    <source>
        <strain>cv. Columbia</strain>
    </source>
</reference>
<reference key="4">
    <citation type="journal article" date="2003" name="Science">
        <title>Empirical analysis of transcriptional activity in the Arabidopsis genome.</title>
        <authorList>
            <person name="Yamada K."/>
            <person name="Lim J."/>
            <person name="Dale J.M."/>
            <person name="Chen H."/>
            <person name="Shinn P."/>
            <person name="Palm C.J."/>
            <person name="Southwick A.M."/>
            <person name="Wu H.C."/>
            <person name="Kim C.J."/>
            <person name="Nguyen M."/>
            <person name="Pham P.K."/>
            <person name="Cheuk R.F."/>
            <person name="Karlin-Newmann G."/>
            <person name="Liu S.X."/>
            <person name="Lam B."/>
            <person name="Sakano H."/>
            <person name="Wu T."/>
            <person name="Yu G."/>
            <person name="Miranda M."/>
            <person name="Quach H.L."/>
            <person name="Tripp M."/>
            <person name="Chang C.H."/>
            <person name="Lee J.M."/>
            <person name="Toriumi M.J."/>
            <person name="Chan M.M."/>
            <person name="Tang C.C."/>
            <person name="Onodera C.S."/>
            <person name="Deng J.M."/>
            <person name="Akiyama K."/>
            <person name="Ansari Y."/>
            <person name="Arakawa T."/>
            <person name="Banh J."/>
            <person name="Banno F."/>
            <person name="Bowser L."/>
            <person name="Brooks S.Y."/>
            <person name="Carninci P."/>
            <person name="Chao Q."/>
            <person name="Choy N."/>
            <person name="Enju A."/>
            <person name="Goldsmith A.D."/>
            <person name="Gurjal M."/>
            <person name="Hansen N.F."/>
            <person name="Hayashizaki Y."/>
            <person name="Johnson-Hopson C."/>
            <person name="Hsuan V.W."/>
            <person name="Iida K."/>
            <person name="Karnes M."/>
            <person name="Khan S."/>
            <person name="Koesema E."/>
            <person name="Ishida J."/>
            <person name="Jiang P.X."/>
            <person name="Jones T."/>
            <person name="Kawai J."/>
            <person name="Kamiya A."/>
            <person name="Meyers C."/>
            <person name="Nakajima M."/>
            <person name="Narusaka M."/>
            <person name="Seki M."/>
            <person name="Sakurai T."/>
            <person name="Satou M."/>
            <person name="Tamse R."/>
            <person name="Vaysberg M."/>
            <person name="Wallender E.K."/>
            <person name="Wong C."/>
            <person name="Yamamura Y."/>
            <person name="Yuan S."/>
            <person name="Shinozaki K."/>
            <person name="Davis R.W."/>
            <person name="Theologis A."/>
            <person name="Ecker J.R."/>
        </authorList>
    </citation>
    <scope>NUCLEOTIDE SEQUENCE [LARGE SCALE MRNA]</scope>
    <source>
        <strain>cv. Columbia</strain>
    </source>
</reference>
<reference key="5">
    <citation type="submission" date="2005-03" db="EMBL/GenBank/DDBJ databases">
        <title>Large-scale analysis of RIKEN Arabidopsis full-length (RAFL) cDNAs.</title>
        <authorList>
            <person name="Totoki Y."/>
            <person name="Seki M."/>
            <person name="Ishida J."/>
            <person name="Nakajima M."/>
            <person name="Enju A."/>
            <person name="Kamiya A."/>
            <person name="Narusaka M."/>
            <person name="Shin-i T."/>
            <person name="Nakagawa M."/>
            <person name="Sakamoto N."/>
            <person name="Oishi K."/>
            <person name="Kohara Y."/>
            <person name="Kobayashi M."/>
            <person name="Toyoda A."/>
            <person name="Sakaki Y."/>
            <person name="Sakurai T."/>
            <person name="Iida K."/>
            <person name="Akiyama K."/>
            <person name="Satou M."/>
            <person name="Toyoda T."/>
            <person name="Konagaya A."/>
            <person name="Carninci P."/>
            <person name="Kawai J."/>
            <person name="Hayashizaki Y."/>
            <person name="Shinozaki K."/>
        </authorList>
    </citation>
    <scope>NUCLEOTIDE SEQUENCE [LARGE SCALE MRNA] OF 564-917</scope>
    <source>
        <strain>cv. Columbia</strain>
    </source>
</reference>
<reference key="6">
    <citation type="journal article" date="2009" name="Lipids">
        <title>Diversity of the enzymatic activity in the lipoxygenase gene family of Arabidopsis thaliana.</title>
        <authorList>
            <person name="Bannenberg G."/>
            <person name="Martinez M."/>
            <person name="Hamberg M."/>
            <person name="Castresana C."/>
        </authorList>
    </citation>
    <scope>FUNCTION</scope>
    <scope>CATALYTIC ACTIVITY</scope>
</reference>
<protein>
    <recommendedName>
        <fullName evidence="7">Lipoxygenase 6, chloroplastic</fullName>
        <shortName evidence="7">AtLOX6</shortName>
        <ecNumber evidence="6">1.13.11.12</ecNumber>
    </recommendedName>
</protein>
<name>LOX6_ARATH</name>
<dbReference type="EC" id="1.13.11.12" evidence="6"/>
<dbReference type="EMBL" id="AJ748537">
    <property type="protein sequence ID" value="CAG38328.1"/>
    <property type="molecule type" value="mRNA"/>
</dbReference>
<dbReference type="EMBL" id="AC011020">
    <property type="protein sequence ID" value="AAG52309.1"/>
    <property type="molecule type" value="Genomic_DNA"/>
</dbReference>
<dbReference type="EMBL" id="CP002684">
    <property type="protein sequence ID" value="AEE34664.1"/>
    <property type="molecule type" value="Genomic_DNA"/>
</dbReference>
<dbReference type="EMBL" id="AY081253">
    <property type="protein sequence ID" value="AAL91142.1"/>
    <property type="molecule type" value="mRNA"/>
</dbReference>
<dbReference type="EMBL" id="BT010546">
    <property type="protein sequence ID" value="AAQ65169.1"/>
    <property type="molecule type" value="mRNA"/>
</dbReference>
<dbReference type="EMBL" id="AK222124">
    <property type="protein sequence ID" value="BAD95111.1"/>
    <property type="status" value="ALT_INIT"/>
    <property type="molecule type" value="mRNA"/>
</dbReference>
<dbReference type="EMBL" id="AK230188">
    <property type="protein sequence ID" value="BAF01997.1"/>
    <property type="molecule type" value="mRNA"/>
</dbReference>
<dbReference type="PIR" id="B96699">
    <property type="entry name" value="B96699"/>
</dbReference>
<dbReference type="RefSeq" id="NP_176923.1">
    <property type="nucleotide sequence ID" value="NM_105423.3"/>
</dbReference>
<dbReference type="SMR" id="Q9CAG3"/>
<dbReference type="FunCoup" id="Q9CAG3">
    <property type="interactions" value="206"/>
</dbReference>
<dbReference type="STRING" id="3702.Q9CAG3"/>
<dbReference type="iPTMnet" id="Q9CAG3"/>
<dbReference type="PaxDb" id="3702-AT1G67560.1"/>
<dbReference type="ProteomicsDB" id="238425"/>
<dbReference type="EnsemblPlants" id="AT1G67560.1">
    <property type="protein sequence ID" value="AT1G67560.1"/>
    <property type="gene ID" value="AT1G67560"/>
</dbReference>
<dbReference type="GeneID" id="843077"/>
<dbReference type="Gramene" id="AT1G67560.1">
    <property type="protein sequence ID" value="AT1G67560.1"/>
    <property type="gene ID" value="AT1G67560"/>
</dbReference>
<dbReference type="KEGG" id="ath:AT1G67560"/>
<dbReference type="Araport" id="AT1G67560"/>
<dbReference type="TAIR" id="AT1G67560">
    <property type="gene designation" value="LOX6"/>
</dbReference>
<dbReference type="eggNOG" id="ENOG502QQSP">
    <property type="taxonomic scope" value="Eukaryota"/>
</dbReference>
<dbReference type="HOGENOM" id="CLU_004282_0_0_1"/>
<dbReference type="InParanoid" id="Q9CAG3"/>
<dbReference type="OMA" id="HWINDHE"/>
<dbReference type="PhylomeDB" id="Q9CAG3"/>
<dbReference type="BRENDA" id="1.13.11.12">
    <property type="organism ID" value="399"/>
</dbReference>
<dbReference type="UniPathway" id="UPA00382"/>
<dbReference type="PRO" id="PR:Q9CAG3"/>
<dbReference type="Proteomes" id="UP000006548">
    <property type="component" value="Chromosome 1"/>
</dbReference>
<dbReference type="ExpressionAtlas" id="Q9CAG3">
    <property type="expression patterns" value="baseline and differential"/>
</dbReference>
<dbReference type="GO" id="GO:0009507">
    <property type="term" value="C:chloroplast"/>
    <property type="evidence" value="ECO:0007669"/>
    <property type="project" value="UniProtKB-SubCell"/>
</dbReference>
<dbReference type="GO" id="GO:0005886">
    <property type="term" value="C:plasma membrane"/>
    <property type="evidence" value="ECO:0007005"/>
    <property type="project" value="TAIR"/>
</dbReference>
<dbReference type="GO" id="GO:0016165">
    <property type="term" value="F:linoleate 13S-lipoxygenase activity"/>
    <property type="evidence" value="ECO:0000314"/>
    <property type="project" value="UniProtKB"/>
</dbReference>
<dbReference type="GO" id="GO:0046872">
    <property type="term" value="F:metal ion binding"/>
    <property type="evidence" value="ECO:0007669"/>
    <property type="project" value="UniProtKB-KW"/>
</dbReference>
<dbReference type="GO" id="GO:0009695">
    <property type="term" value="P:jasmonic acid biosynthetic process"/>
    <property type="evidence" value="ECO:0000315"/>
    <property type="project" value="CACAO"/>
</dbReference>
<dbReference type="GO" id="GO:0034440">
    <property type="term" value="P:lipid oxidation"/>
    <property type="evidence" value="ECO:0000314"/>
    <property type="project" value="TAIR"/>
</dbReference>
<dbReference type="GO" id="GO:0031408">
    <property type="term" value="P:oxylipin biosynthetic process"/>
    <property type="evidence" value="ECO:0007669"/>
    <property type="project" value="UniProtKB-UniPathway"/>
</dbReference>
<dbReference type="GO" id="GO:0009611">
    <property type="term" value="P:response to wounding"/>
    <property type="evidence" value="ECO:0000315"/>
    <property type="project" value="CACAO"/>
</dbReference>
<dbReference type="CDD" id="cd01751">
    <property type="entry name" value="PLAT_LH2"/>
    <property type="match status" value="1"/>
</dbReference>
<dbReference type="FunFam" id="1.20.245.10:FF:000002">
    <property type="entry name" value="Lipoxygenase"/>
    <property type="match status" value="1"/>
</dbReference>
<dbReference type="FunFam" id="2.60.60.20:FF:000039">
    <property type="entry name" value="Lipoxygenase"/>
    <property type="match status" value="1"/>
</dbReference>
<dbReference type="Gene3D" id="3.10.450.60">
    <property type="match status" value="1"/>
</dbReference>
<dbReference type="Gene3D" id="4.10.375.10">
    <property type="entry name" value="Lipoxygenase-1, Domain 2"/>
    <property type="match status" value="1"/>
</dbReference>
<dbReference type="Gene3D" id="4.10.372.10">
    <property type="entry name" value="Lipoxygenase-1, Domain 3"/>
    <property type="match status" value="1"/>
</dbReference>
<dbReference type="Gene3D" id="1.20.245.10">
    <property type="entry name" value="Lipoxygenase-1, Domain 5"/>
    <property type="match status" value="1"/>
</dbReference>
<dbReference type="Gene3D" id="2.60.60.20">
    <property type="entry name" value="PLAT/LH2 domain"/>
    <property type="match status" value="1"/>
</dbReference>
<dbReference type="InterPro" id="IPR000907">
    <property type="entry name" value="LipOase"/>
</dbReference>
<dbReference type="InterPro" id="IPR013819">
    <property type="entry name" value="LipOase_C"/>
</dbReference>
<dbReference type="InterPro" id="IPR036226">
    <property type="entry name" value="LipOase_C_sf"/>
</dbReference>
<dbReference type="InterPro" id="IPR020834">
    <property type="entry name" value="LipOase_CS"/>
</dbReference>
<dbReference type="InterPro" id="IPR020833">
    <property type="entry name" value="LipOase_Fe_BS"/>
</dbReference>
<dbReference type="InterPro" id="IPR001246">
    <property type="entry name" value="LipOase_plant"/>
</dbReference>
<dbReference type="InterPro" id="IPR042057">
    <property type="entry name" value="Lipoxy_PLAT/LH2"/>
</dbReference>
<dbReference type="InterPro" id="IPR027433">
    <property type="entry name" value="Lipoxygenase_dom_3"/>
</dbReference>
<dbReference type="InterPro" id="IPR001024">
    <property type="entry name" value="PLAT/LH2_dom"/>
</dbReference>
<dbReference type="InterPro" id="IPR036392">
    <property type="entry name" value="PLAT/LH2_dom_sf"/>
</dbReference>
<dbReference type="PANTHER" id="PTHR11771">
    <property type="entry name" value="LIPOXYGENASE"/>
    <property type="match status" value="1"/>
</dbReference>
<dbReference type="Pfam" id="PF00305">
    <property type="entry name" value="Lipoxygenase"/>
    <property type="match status" value="1"/>
</dbReference>
<dbReference type="Pfam" id="PF01477">
    <property type="entry name" value="PLAT"/>
    <property type="match status" value="1"/>
</dbReference>
<dbReference type="PRINTS" id="PR00087">
    <property type="entry name" value="LIPOXYGENASE"/>
</dbReference>
<dbReference type="PRINTS" id="PR00468">
    <property type="entry name" value="PLTLPOXGNASE"/>
</dbReference>
<dbReference type="SMART" id="SM00308">
    <property type="entry name" value="LH2"/>
    <property type="match status" value="1"/>
</dbReference>
<dbReference type="SUPFAM" id="SSF49723">
    <property type="entry name" value="Lipase/lipooxygenase domain (PLAT/LH2 domain)"/>
    <property type="match status" value="1"/>
</dbReference>
<dbReference type="SUPFAM" id="SSF48484">
    <property type="entry name" value="Lipoxigenase"/>
    <property type="match status" value="1"/>
</dbReference>
<dbReference type="PROSITE" id="PS00711">
    <property type="entry name" value="LIPOXYGENASE_1"/>
    <property type="match status" value="1"/>
</dbReference>
<dbReference type="PROSITE" id="PS00081">
    <property type="entry name" value="LIPOXYGENASE_2"/>
    <property type="match status" value="1"/>
</dbReference>
<dbReference type="PROSITE" id="PS51393">
    <property type="entry name" value="LIPOXYGENASE_3"/>
    <property type="match status" value="1"/>
</dbReference>
<dbReference type="PROSITE" id="PS50095">
    <property type="entry name" value="PLAT"/>
    <property type="match status" value="1"/>
</dbReference>
<organism>
    <name type="scientific">Arabidopsis thaliana</name>
    <name type="common">Mouse-ear cress</name>
    <dbReference type="NCBI Taxonomy" id="3702"/>
    <lineage>
        <taxon>Eukaryota</taxon>
        <taxon>Viridiplantae</taxon>
        <taxon>Streptophyta</taxon>
        <taxon>Embryophyta</taxon>
        <taxon>Tracheophyta</taxon>
        <taxon>Spermatophyta</taxon>
        <taxon>Magnoliopsida</taxon>
        <taxon>eudicotyledons</taxon>
        <taxon>Gunneridae</taxon>
        <taxon>Pentapetalae</taxon>
        <taxon>rosids</taxon>
        <taxon>malvids</taxon>
        <taxon>Brassicales</taxon>
        <taxon>Brassicaceae</taxon>
        <taxon>Camelineae</taxon>
        <taxon>Arabidopsis</taxon>
    </lineage>
</organism>
<evidence type="ECO:0000250" key="1">
    <source>
        <dbReference type="UniProtKB" id="Q06327"/>
    </source>
</evidence>
<evidence type="ECO:0000255" key="2"/>
<evidence type="ECO:0000255" key="3">
    <source>
        <dbReference type="PROSITE-ProRule" id="PRU00152"/>
    </source>
</evidence>
<evidence type="ECO:0000255" key="4">
    <source>
        <dbReference type="PROSITE-ProRule" id="PRU00726"/>
    </source>
</evidence>
<evidence type="ECO:0000256" key="5">
    <source>
        <dbReference type="SAM" id="MobiDB-lite"/>
    </source>
</evidence>
<evidence type="ECO:0000269" key="6">
    <source>
    </source>
</evidence>
<evidence type="ECO:0000303" key="7">
    <source ref="1"/>
</evidence>
<evidence type="ECO:0000305" key="8"/>
<evidence type="ECO:0000312" key="9">
    <source>
        <dbReference type="Araport" id="AT1G67560"/>
    </source>
</evidence>
<evidence type="ECO:0000312" key="10">
    <source>
        <dbReference type="EMBL" id="AAG52309.1"/>
    </source>
</evidence>
<gene>
    <name evidence="7" type="primary">LOX6</name>
    <name evidence="9" type="ordered locus">At1g67560</name>
    <name evidence="10" type="ORF">F12B7.11</name>
</gene>
<feature type="transit peptide" description="Chloroplast" evidence="2">
    <location>
        <begin position="1"/>
        <end position="40"/>
    </location>
</feature>
<feature type="chain" id="PRO_0000380595" description="Lipoxygenase 6, chloroplastic">
    <location>
        <begin position="41"/>
        <end position="917"/>
    </location>
</feature>
<feature type="domain" description="PLAT" evidence="3">
    <location>
        <begin position="98"/>
        <end position="216"/>
    </location>
</feature>
<feature type="domain" description="Lipoxygenase" evidence="4">
    <location>
        <begin position="219"/>
        <end position="917"/>
    </location>
</feature>
<feature type="region of interest" description="Disordered" evidence="5">
    <location>
        <begin position="46"/>
        <end position="66"/>
    </location>
</feature>
<feature type="region of interest" description="Disordered" evidence="5">
    <location>
        <begin position="880"/>
        <end position="904"/>
    </location>
</feature>
<feature type="compositionally biased region" description="Basic and acidic residues" evidence="5">
    <location>
        <begin position="46"/>
        <end position="57"/>
    </location>
</feature>
<feature type="binding site" evidence="4">
    <location>
        <position position="575"/>
    </location>
    <ligand>
        <name>Fe cation</name>
        <dbReference type="ChEBI" id="CHEBI:24875"/>
        <note>catalytic</note>
    </ligand>
</feature>
<feature type="binding site" evidence="4">
    <location>
        <position position="580"/>
    </location>
    <ligand>
        <name>Fe cation</name>
        <dbReference type="ChEBI" id="CHEBI:24875"/>
        <note>catalytic</note>
    </ligand>
</feature>
<feature type="binding site" evidence="4">
    <location>
        <position position="767"/>
    </location>
    <ligand>
        <name>Fe cation</name>
        <dbReference type="ChEBI" id="CHEBI:24875"/>
        <note>catalytic</note>
    </ligand>
</feature>
<feature type="binding site" evidence="4">
    <location>
        <position position="771"/>
    </location>
    <ligand>
        <name>Fe cation</name>
        <dbReference type="ChEBI" id="CHEBI:24875"/>
        <note>catalytic</note>
    </ligand>
</feature>
<feature type="binding site" evidence="4">
    <location>
        <position position="917"/>
    </location>
    <ligand>
        <name>Fe cation</name>
        <dbReference type="ChEBI" id="CHEBI:24875"/>
        <note>catalytic</note>
    </ligand>
</feature>
<sequence length="917" mass="104516">MFVASPVKTNFNGVSLVKSPAFSALSCRKQHRVPISRQVRAVISREEKAVDQEDGKKSTNKPLINSSQFPWQRSKYTGSKTVTAVVKIRKKIKEKLTERFEHQLELFMKAIGQGMLIQLVSEEIDPETGKGRKSLESPVMGLPKAVKDPRYLVFTADFTVPINFGKPGAILVTNLLSTEICLSEIIIEDSTDTILFPANTWIHSKNDNPQARIIFRSQPCLPSETPDGIKELREKDLVSVRGDGKGERKPHERIYDYDVYNDLGDPRKTERVRPVLGVPETPYPRRCRTGRPLVSKDPPCESRGKEKEEFYVPRDEVFEEIKRDTFRAGRFKALFHNLVPSIAAALSNLDIPFTCFSDIDNLYKSNIVLGHTEPKDTGLGGFIGGFMNGILNVTETLLKYDTPAVIKWDRFAWLRDNEFGRQALAGVNPVNIELLKELPIRSNLDPALYGPQESVLTEEIIAREVEHYGTTIEKALEEKRLFLVDYHDILLPFVEKINSIKEDPRKTYASRTIFFYSKNGALRPLAIELSLPPTAESENKFVYTHGHDATTHWIWKLAKAHVCSNDAGVHQLVNHWLRTHASMEPYIIATNRQLSTMHPVYKLLHPHMRYTLEINARARKSLINGGGIIESCFTPGKYAMELSSAAYKSMWRFDMEGLPADLVRRGMAEEDSSAECGVRLVIDDYPYAADGLLIWKAIKDLVESYVKHFYSDSKSITSDLELQAWWDEIKNKGHYDKKDEPWWPKLNTTQDLSQILTNMIWIASGQHAAINFGQYPFGGYVPNRPTLLRKLIPQETDPDYEMFMRNPQYSFLGSLPTQLQATKVMAVQETLSTHSPDEEYLIELREVQRHWFQDEQVVKYFNKFSEELVKIEKTINERNKDKKLKNRTGAGMPPYELLLPTSPHGVTGRGIPNSISI</sequence>
<comment type="function">
    <text evidence="1 4 6">Plant lipoxygenases may be involved in a number of diverse aspects of plant physiology including growth and development, pest resistance, and senescence or responses to wounding. Catalyzes the hydroperoxidation of lipids containing a cis,cis-1,4-pentadiene structure (By similarity). 13S-lipoxygenase that can use linolenic acid as substrates.</text>
</comment>
<comment type="catalytic activity">
    <reaction evidence="6">
        <text>(9Z,12Z)-octadecadienoate + O2 = (13S)-hydroperoxy-(9Z,11E)-octadecadienoate</text>
        <dbReference type="Rhea" id="RHEA:22780"/>
        <dbReference type="ChEBI" id="CHEBI:15379"/>
        <dbReference type="ChEBI" id="CHEBI:30245"/>
        <dbReference type="ChEBI" id="CHEBI:57466"/>
        <dbReference type="EC" id="1.13.11.12"/>
    </reaction>
</comment>
<comment type="catalytic activity">
    <reaction evidence="6">
        <text>(9Z,12Z,15Z)-octadecatrienoate + O2 = (13S)-hydroperoxy-(9Z,11E,15Z)-octadecatrienoate</text>
        <dbReference type="Rhea" id="RHEA:34495"/>
        <dbReference type="ChEBI" id="CHEBI:15379"/>
        <dbReference type="ChEBI" id="CHEBI:32387"/>
        <dbReference type="ChEBI" id="CHEBI:58757"/>
        <dbReference type="EC" id="1.13.11.12"/>
    </reaction>
</comment>
<comment type="cofactor">
    <cofactor evidence="4">
        <name>Fe cation</name>
        <dbReference type="ChEBI" id="CHEBI:24875"/>
    </cofactor>
    <text evidence="4">Binds 1 Fe cation per subunit.</text>
</comment>
<comment type="pathway">
    <text evidence="4">Lipid metabolism; oxylipin biosynthesis.</text>
</comment>
<comment type="subcellular location">
    <subcellularLocation>
        <location evidence="2">Plastid</location>
        <location evidence="2">Chloroplast</location>
    </subcellularLocation>
</comment>
<comment type="similarity">
    <text evidence="8">Belongs to the lipoxygenase family.</text>
</comment>
<comment type="sequence caution" evidence="8">
    <conflict type="erroneous initiation">
        <sequence resource="EMBL-CDS" id="BAD95111"/>
    </conflict>
    <text>Truncated N-terminus.</text>
</comment>